<sequence>MSSCGACTCGAAAARLLTTSLTSAQRGISCGRIHVPVLGRLGTTLDAQALRRAPLRTFSETPAYFASKDGANKDGSGDGNKKSVTEGSSKKSGSGNSGKGGNQLRCPKCGDLCTHVETFVSSTRFVKCEKCHHFFVVLSEADSKKSIIKEPESAAEAVKLAFQQKPPPPPKKIYNYLDKYVVGQSFAKKVLSVAVYNHYKRIYNNIPANLRQQAEAEKQTSLTPRELEIRRREDEYRFTKLLQIAGISPHGNALGASMQQQVNQQMPQEKRGGEVLDSSQDDIKLEKSNILLLGPTGSGKTLLAQTLAKCLDVPFAICDCTTLTQAGYVGEDIESVIAKLLQDANYNVEKAQQGIVFLDEVDKIGSVPGIHQLRDVGGEGVQQGLLKLLEGTIVNVPEKNSRKLRGETVQVDTTNVLFVASGAFNGLDRIISRRKNEKYLGFGTPSNLGKGRRAAAAADLANRSGESNTHQDIEEKDRLLRHVEARDLIEFGMIPEFVGRLPVVVPLHSLDEKTLVQILTEPRNAVIPQYQALFSMDKCELNVTEDALKAIARLALERKTGARGLRSIMEKLLLEPMFEVPNSDIVCVEVDKEVVEGKKEPGYIRAPSKESSEEEYDSGVEEDGWPRQADAANS</sequence>
<accession>Q9JHS4</accession>
<accession>E9QLZ8</accession>
<accession>Q9WVD1</accession>
<organism>
    <name type="scientific">Mus musculus</name>
    <name type="common">Mouse</name>
    <dbReference type="NCBI Taxonomy" id="10090"/>
    <lineage>
        <taxon>Eukaryota</taxon>
        <taxon>Metazoa</taxon>
        <taxon>Chordata</taxon>
        <taxon>Craniata</taxon>
        <taxon>Vertebrata</taxon>
        <taxon>Euteleostomi</taxon>
        <taxon>Mammalia</taxon>
        <taxon>Eutheria</taxon>
        <taxon>Euarchontoglires</taxon>
        <taxon>Glires</taxon>
        <taxon>Rodentia</taxon>
        <taxon>Myomorpha</taxon>
        <taxon>Muroidea</taxon>
        <taxon>Muridae</taxon>
        <taxon>Murinae</taxon>
        <taxon>Mus</taxon>
        <taxon>Mus</taxon>
    </lineage>
</organism>
<keyword id="KW-0007">Acetylation</keyword>
<keyword id="KW-0067">ATP-binding</keyword>
<keyword id="KW-0143">Chaperone</keyword>
<keyword id="KW-0378">Hydrolase</keyword>
<keyword id="KW-0479">Metal-binding</keyword>
<keyword id="KW-0496">Mitochondrion</keyword>
<keyword id="KW-1135">Mitochondrion nucleoid</keyword>
<keyword id="KW-0547">Nucleotide-binding</keyword>
<keyword id="KW-0597">Phosphoprotein</keyword>
<keyword id="KW-1185">Reference proteome</keyword>
<keyword id="KW-0809">Transit peptide</keyword>
<keyword id="KW-0862">Zinc</keyword>
<name>CLPX_MOUSE</name>
<gene>
    <name evidence="8" type="primary">Clpx</name>
</gene>
<protein>
    <recommendedName>
        <fullName>ATP-dependent clpX-like chaperone, mitochondrial</fullName>
        <ecNumber evidence="5">3.6.4.10</ecNumber>
    </recommendedName>
    <alternativeName>
        <fullName evidence="7">ATP-dependent Clp protease ATP-binding subunit clpX-like, mitochondrial</fullName>
    </alternativeName>
    <alternativeName>
        <fullName evidence="8">Caseinolytic mitochondrial matrix peptidase chaperone subunit</fullName>
    </alternativeName>
</protein>
<reference key="1">
    <citation type="journal article" date="2000" name="Mamm. Genome">
        <title>Human and mouse mitochondrial orthologs of bacterial ClpX.</title>
        <authorList>
            <person name="Corydon T.J."/>
            <person name="Wilsbech M."/>
            <person name="Jespersgaard C."/>
            <person name="Andresen B.S."/>
            <person name="Borglum A.D."/>
            <person name="Pedersen S."/>
            <person name="Bolund L."/>
            <person name="Gregersen N."/>
            <person name="Bross P."/>
        </authorList>
    </citation>
    <scope>NUCLEOTIDE SEQUENCE [MRNA]</scope>
    <source>
        <strain>BALB/cJ</strain>
    </source>
</reference>
<reference key="2">
    <citation type="journal article" date="1999" name="J. Biol. Chem.">
        <title>Molecular cloning and characterization of a mouse homolog of bacterial ClpX, a novel mammalian class II member of the Hsp100/Clp chaperone family.</title>
        <authorList>
            <person name="Santagata S."/>
            <person name="Bhattacharyya D."/>
            <person name="Wang F.H."/>
            <person name="Singha N."/>
            <person name="Hodtsev A."/>
            <person name="Spanopoulou E."/>
        </authorList>
    </citation>
    <scope>NUCLEOTIDE SEQUENCE [MRNA]</scope>
    <scope>FUNCTION</scope>
    <scope>CATALYTIC ACTIVITY</scope>
    <scope>MUTAGENESIS OF LYS-300</scope>
    <source>
        <strain>BALB/cJ</strain>
    </source>
</reference>
<reference key="3">
    <citation type="journal article" date="2009" name="PLoS Biol.">
        <title>Lineage-specific biology revealed by a finished genome assembly of the mouse.</title>
        <authorList>
            <person name="Church D.M."/>
            <person name="Goodstadt L."/>
            <person name="Hillier L.W."/>
            <person name="Zody M.C."/>
            <person name="Goldstein S."/>
            <person name="She X."/>
            <person name="Bult C.J."/>
            <person name="Agarwala R."/>
            <person name="Cherry J.L."/>
            <person name="DiCuccio M."/>
            <person name="Hlavina W."/>
            <person name="Kapustin Y."/>
            <person name="Meric P."/>
            <person name="Maglott D."/>
            <person name="Birtle Z."/>
            <person name="Marques A.C."/>
            <person name="Graves T."/>
            <person name="Zhou S."/>
            <person name="Teague B."/>
            <person name="Potamousis K."/>
            <person name="Churas C."/>
            <person name="Place M."/>
            <person name="Herschleb J."/>
            <person name="Runnheim R."/>
            <person name="Forrest D."/>
            <person name="Amos-Landgraf J."/>
            <person name="Schwartz D.C."/>
            <person name="Cheng Z."/>
            <person name="Lindblad-Toh K."/>
            <person name="Eichler E.E."/>
            <person name="Ponting C.P."/>
        </authorList>
    </citation>
    <scope>NUCLEOTIDE SEQUENCE [LARGE SCALE GENOMIC DNA]</scope>
    <source>
        <strain>C57BL/6J</strain>
    </source>
</reference>
<reference key="4">
    <citation type="journal article" date="2010" name="Cell">
        <title>A tissue-specific atlas of mouse protein phosphorylation and expression.</title>
        <authorList>
            <person name="Huttlin E.L."/>
            <person name="Jedrychowski M.P."/>
            <person name="Elias J.E."/>
            <person name="Goswami T."/>
            <person name="Rad R."/>
            <person name="Beausoleil S.A."/>
            <person name="Villen J."/>
            <person name="Haas W."/>
            <person name="Sowa M.E."/>
            <person name="Gygi S.P."/>
        </authorList>
    </citation>
    <scope>IDENTIFICATION BY MASS SPECTROMETRY [LARGE SCALE ANALYSIS]</scope>
    <source>
        <tissue>Brain</tissue>
        <tissue>Brown adipose tissue</tissue>
        <tissue>Heart</tissue>
        <tissue>Kidney</tissue>
        <tissue>Liver</tissue>
        <tissue>Pancreas</tissue>
        <tissue>Spleen</tissue>
        <tissue>Testis</tissue>
    </source>
</reference>
<reference key="5">
    <citation type="journal article" date="2012" name="J. Struct. Biol.">
        <title>Substrate recognition and processing by a Walker B mutant of the human mitochondrial AAA+ protein CLPX.</title>
        <authorList>
            <person name="Lowth B.R."/>
            <person name="Kirstein-Miles J."/>
            <person name="Saiyed T."/>
            <person name="Broetz-Oesterhelt H."/>
            <person name="Morimoto R.I."/>
            <person name="Truscott K.N."/>
            <person name="Dougan D.A."/>
        </authorList>
    </citation>
    <scope>TISSUE SPECIFICITY</scope>
    <scope>SUBCELLULAR LOCATION</scope>
    <scope>SUBUNIT</scope>
</reference>
<feature type="transit peptide" description="Mitochondrion" evidence="2">
    <location>
        <begin position="1"/>
        <end position="56"/>
    </location>
</feature>
<feature type="chain" id="PRO_0000005519" description="ATP-dependent clpX-like chaperone, mitochondrial">
    <location>
        <begin position="57"/>
        <end position="634"/>
    </location>
</feature>
<feature type="domain" description="ClpX-type ZB" evidence="3">
    <location>
        <begin position="94"/>
        <end position="147"/>
    </location>
</feature>
<feature type="region of interest" description="Disordered" evidence="4">
    <location>
        <begin position="69"/>
        <end position="102"/>
    </location>
</feature>
<feature type="region of interest" description="Disordered" evidence="4">
    <location>
        <begin position="599"/>
        <end position="634"/>
    </location>
</feature>
<feature type="compositionally biased region" description="Basic and acidic residues" evidence="4">
    <location>
        <begin position="70"/>
        <end position="84"/>
    </location>
</feature>
<feature type="compositionally biased region" description="Low complexity" evidence="4">
    <location>
        <begin position="85"/>
        <end position="94"/>
    </location>
</feature>
<feature type="compositionally biased region" description="Basic and acidic residues" evidence="4">
    <location>
        <begin position="599"/>
        <end position="611"/>
    </location>
</feature>
<feature type="compositionally biased region" description="Acidic residues" evidence="4">
    <location>
        <begin position="612"/>
        <end position="623"/>
    </location>
</feature>
<feature type="binding site" evidence="3">
    <location>
        <position position="106"/>
    </location>
    <ligand>
        <name>Zn(2+)</name>
        <dbReference type="ChEBI" id="CHEBI:29105"/>
    </ligand>
</feature>
<feature type="binding site" evidence="3">
    <location>
        <position position="109"/>
    </location>
    <ligand>
        <name>Zn(2+)</name>
        <dbReference type="ChEBI" id="CHEBI:29105"/>
    </ligand>
</feature>
<feature type="binding site" evidence="3">
    <location>
        <position position="128"/>
    </location>
    <ligand>
        <name>Zn(2+)</name>
        <dbReference type="ChEBI" id="CHEBI:29105"/>
    </ligand>
</feature>
<feature type="binding site" evidence="3">
    <location>
        <position position="131"/>
    </location>
    <ligand>
        <name>Zn(2+)</name>
        <dbReference type="ChEBI" id="CHEBI:29105"/>
    </ligand>
</feature>
<feature type="binding site">
    <location>
        <begin position="295"/>
        <end position="302"/>
    </location>
    <ligand>
        <name>ATP</name>
        <dbReference type="ChEBI" id="CHEBI:30616"/>
    </ligand>
</feature>
<feature type="modified residue" description="N6-acetyllysine" evidence="1">
    <location>
        <position position="438"/>
    </location>
</feature>
<feature type="modified residue" description="Phosphoserine" evidence="1">
    <location>
        <position position="618"/>
    </location>
</feature>
<feature type="mutagenesis site" description="Loss of ATP hydrolysis." evidence="5">
    <original>K</original>
    <variation>A</variation>
    <location>
        <position position="300"/>
    </location>
</feature>
<feature type="sequence conflict" description="In Ref. 2; AAD42187." evidence="7" ref="2">
    <original>V</original>
    <variation>M</variation>
    <location>
        <position position="37"/>
    </location>
</feature>
<feature type="sequence conflict" description="In Ref. 2; AAD42187." evidence="7" ref="2">
    <original>G</original>
    <variation>A</variation>
    <location>
        <position position="93"/>
    </location>
</feature>
<feature type="sequence conflict" description="In Ref. 2; AAD42187." evidence="7" ref="2">
    <location>
        <begin position="457"/>
        <end position="458"/>
    </location>
</feature>
<feature type="sequence conflict" description="In Ref. 1; CAC01232." evidence="7" ref="1">
    <original>A</original>
    <variation>R</variation>
    <location>
        <position position="458"/>
    </location>
</feature>
<feature type="sequence conflict" description="In Ref. 2; AAD42187." evidence="7" ref="2">
    <original>A</original>
    <variation>R</variation>
    <location>
        <position position="631"/>
    </location>
</feature>
<dbReference type="EC" id="3.6.4.10" evidence="5"/>
<dbReference type="EMBL" id="AJ276991">
    <property type="protein sequence ID" value="CAC01232.1"/>
    <property type="molecule type" value="mRNA"/>
</dbReference>
<dbReference type="EMBL" id="AF134983">
    <property type="protein sequence ID" value="AAD42187.1"/>
    <property type="molecule type" value="mRNA"/>
</dbReference>
<dbReference type="EMBL" id="AC110235">
    <property type="status" value="NOT_ANNOTATED_CDS"/>
    <property type="molecule type" value="Genomic_DNA"/>
</dbReference>
<dbReference type="CCDS" id="CCDS23288.1"/>
<dbReference type="RefSeq" id="NP_035932.2">
    <property type="nucleotide sequence ID" value="NM_011802.3"/>
</dbReference>
<dbReference type="SMR" id="Q9JHS4"/>
<dbReference type="BioGRID" id="234776">
    <property type="interactions" value="10"/>
</dbReference>
<dbReference type="FunCoup" id="Q9JHS4">
    <property type="interactions" value="3331"/>
</dbReference>
<dbReference type="STRING" id="10090.ENSMUSP00000015501"/>
<dbReference type="GlyGen" id="Q9JHS4">
    <property type="glycosylation" value="1 site, 1 O-linked glycan (1 site)"/>
</dbReference>
<dbReference type="iPTMnet" id="Q9JHS4"/>
<dbReference type="PhosphoSitePlus" id="Q9JHS4"/>
<dbReference type="SwissPalm" id="Q9JHS4"/>
<dbReference type="jPOST" id="Q9JHS4"/>
<dbReference type="PaxDb" id="10090-ENSMUSP00000015501"/>
<dbReference type="PeptideAtlas" id="Q9JHS4"/>
<dbReference type="ProteomicsDB" id="285494"/>
<dbReference type="Pumba" id="Q9JHS4"/>
<dbReference type="Antibodypedia" id="51984">
    <property type="antibodies" value="107 antibodies from 26 providers"/>
</dbReference>
<dbReference type="DNASU" id="270166"/>
<dbReference type="Ensembl" id="ENSMUST00000015501.11">
    <property type="protein sequence ID" value="ENSMUSP00000015501.5"/>
    <property type="gene ID" value="ENSMUSG00000015357.11"/>
</dbReference>
<dbReference type="GeneID" id="270166"/>
<dbReference type="KEGG" id="mmu:270166"/>
<dbReference type="UCSC" id="uc009qdb.2">
    <property type="organism name" value="mouse"/>
</dbReference>
<dbReference type="AGR" id="MGI:1346017"/>
<dbReference type="CTD" id="10845"/>
<dbReference type="MGI" id="MGI:1346017">
    <property type="gene designation" value="Clpx"/>
</dbReference>
<dbReference type="VEuPathDB" id="HostDB:ENSMUSG00000015357"/>
<dbReference type="eggNOG" id="KOG0745">
    <property type="taxonomic scope" value="Eukaryota"/>
</dbReference>
<dbReference type="GeneTree" id="ENSGT00390000017625"/>
<dbReference type="InParanoid" id="Q9JHS4"/>
<dbReference type="OMA" id="HRSDFTN"/>
<dbReference type="OrthoDB" id="1721884at2759"/>
<dbReference type="PhylomeDB" id="Q9JHS4"/>
<dbReference type="TreeFam" id="TF312884"/>
<dbReference type="Reactome" id="R-MMU-9837999">
    <property type="pathway name" value="Mitochondrial protein degradation"/>
</dbReference>
<dbReference type="BioGRID-ORCS" id="270166">
    <property type="hits" value="11 hits in 77 CRISPR screens"/>
</dbReference>
<dbReference type="ChiTaRS" id="Clpx">
    <property type="organism name" value="mouse"/>
</dbReference>
<dbReference type="PRO" id="PR:Q9JHS4"/>
<dbReference type="Proteomes" id="UP000000589">
    <property type="component" value="Chromosome 9"/>
</dbReference>
<dbReference type="RNAct" id="Q9JHS4">
    <property type="molecule type" value="protein"/>
</dbReference>
<dbReference type="Bgee" id="ENSMUSG00000015357">
    <property type="expression patterns" value="Expressed in spermatid and 244 other cell types or tissues"/>
</dbReference>
<dbReference type="ExpressionAtlas" id="Q9JHS4">
    <property type="expression patterns" value="baseline and differential"/>
</dbReference>
<dbReference type="GO" id="GO:0005829">
    <property type="term" value="C:cytosol"/>
    <property type="evidence" value="ECO:0007669"/>
    <property type="project" value="Ensembl"/>
</dbReference>
<dbReference type="GO" id="GO:0009368">
    <property type="term" value="C:endopeptidase Clp complex"/>
    <property type="evidence" value="ECO:0000250"/>
    <property type="project" value="UniProtKB"/>
</dbReference>
<dbReference type="GO" id="GO:0009841">
    <property type="term" value="C:mitochondrial endopeptidase Clp complex"/>
    <property type="evidence" value="ECO:0007669"/>
    <property type="project" value="Ensembl"/>
</dbReference>
<dbReference type="GO" id="GO:0005743">
    <property type="term" value="C:mitochondrial inner membrane"/>
    <property type="evidence" value="ECO:0007005"/>
    <property type="project" value="MGI"/>
</dbReference>
<dbReference type="GO" id="GO:0005759">
    <property type="term" value="C:mitochondrial matrix"/>
    <property type="evidence" value="ECO:0000250"/>
    <property type="project" value="UniProtKB"/>
</dbReference>
<dbReference type="GO" id="GO:0042645">
    <property type="term" value="C:mitochondrial nucleoid"/>
    <property type="evidence" value="ECO:0007669"/>
    <property type="project" value="UniProtKB-SubCell"/>
</dbReference>
<dbReference type="GO" id="GO:0005739">
    <property type="term" value="C:mitochondrion"/>
    <property type="evidence" value="ECO:0000314"/>
    <property type="project" value="MGI"/>
</dbReference>
<dbReference type="GO" id="GO:0005654">
    <property type="term" value="C:nucleoplasm"/>
    <property type="evidence" value="ECO:0007669"/>
    <property type="project" value="Ensembl"/>
</dbReference>
<dbReference type="GO" id="GO:0005524">
    <property type="term" value="F:ATP binding"/>
    <property type="evidence" value="ECO:0000314"/>
    <property type="project" value="MGI"/>
</dbReference>
<dbReference type="GO" id="GO:0016887">
    <property type="term" value="F:ATP hydrolysis activity"/>
    <property type="evidence" value="ECO:0000314"/>
    <property type="project" value="MGI"/>
</dbReference>
<dbReference type="GO" id="GO:0004176">
    <property type="term" value="F:ATP-dependent peptidase activity"/>
    <property type="evidence" value="ECO:0007669"/>
    <property type="project" value="Ensembl"/>
</dbReference>
<dbReference type="GO" id="GO:0140662">
    <property type="term" value="F:ATP-dependent protein folding chaperone"/>
    <property type="evidence" value="ECO:0007669"/>
    <property type="project" value="InterPro"/>
</dbReference>
<dbReference type="GO" id="GO:0016504">
    <property type="term" value="F:peptidase activator activity"/>
    <property type="evidence" value="ECO:0007669"/>
    <property type="project" value="Ensembl"/>
</dbReference>
<dbReference type="GO" id="GO:0046983">
    <property type="term" value="F:protein dimerization activity"/>
    <property type="evidence" value="ECO:0007669"/>
    <property type="project" value="InterPro"/>
</dbReference>
<dbReference type="GO" id="GO:0051082">
    <property type="term" value="F:unfolded protein binding"/>
    <property type="evidence" value="ECO:0007669"/>
    <property type="project" value="InterPro"/>
</dbReference>
<dbReference type="GO" id="GO:0008270">
    <property type="term" value="F:zinc ion binding"/>
    <property type="evidence" value="ECO:0007669"/>
    <property type="project" value="InterPro"/>
</dbReference>
<dbReference type="GO" id="GO:0046034">
    <property type="term" value="P:ATP metabolic process"/>
    <property type="evidence" value="ECO:0007669"/>
    <property type="project" value="Ensembl"/>
</dbReference>
<dbReference type="GO" id="GO:0051603">
    <property type="term" value="P:proteolysis involved in protein catabolic process"/>
    <property type="evidence" value="ECO:0000250"/>
    <property type="project" value="UniProtKB"/>
</dbReference>
<dbReference type="CDD" id="cd19497">
    <property type="entry name" value="RecA-like_ClpX"/>
    <property type="match status" value="1"/>
</dbReference>
<dbReference type="FunFam" id="1.10.8.60:FF:000002">
    <property type="entry name" value="ATP-dependent Clp protease ATP-binding subunit ClpX"/>
    <property type="match status" value="1"/>
</dbReference>
<dbReference type="FunFam" id="3.40.50.300:FF:000378">
    <property type="entry name" value="ATP-dependent Clp protease ATP-binding subunit clpX-like, mitochondrial"/>
    <property type="match status" value="1"/>
</dbReference>
<dbReference type="FunFam" id="3.40.50.300:FF:003247">
    <property type="entry name" value="ATP-dependent Clp protease ATP-binding subunit clpX-like, mitochondrial"/>
    <property type="match status" value="1"/>
</dbReference>
<dbReference type="Gene3D" id="1.10.8.60">
    <property type="match status" value="1"/>
</dbReference>
<dbReference type="Gene3D" id="3.40.50.300">
    <property type="entry name" value="P-loop containing nucleotide triphosphate hydrolases"/>
    <property type="match status" value="1"/>
</dbReference>
<dbReference type="InterPro" id="IPR003593">
    <property type="entry name" value="AAA+_ATPase"/>
</dbReference>
<dbReference type="InterPro" id="IPR050052">
    <property type="entry name" value="ATP-dep_Clp_protease_ClpX"/>
</dbReference>
<dbReference type="InterPro" id="IPR003959">
    <property type="entry name" value="ATPase_AAA_core"/>
</dbReference>
<dbReference type="InterPro" id="IPR019489">
    <property type="entry name" value="Clp_ATPase_C"/>
</dbReference>
<dbReference type="InterPro" id="IPR004487">
    <property type="entry name" value="Clp_protease_ATP-bd_su_ClpX"/>
</dbReference>
<dbReference type="InterPro" id="IPR027417">
    <property type="entry name" value="P-loop_NTPase"/>
</dbReference>
<dbReference type="InterPro" id="IPR010603">
    <property type="entry name" value="Znf_CppX_C4"/>
</dbReference>
<dbReference type="NCBIfam" id="TIGR00382">
    <property type="entry name" value="clpX"/>
    <property type="match status" value="1"/>
</dbReference>
<dbReference type="NCBIfam" id="NF003745">
    <property type="entry name" value="PRK05342.1"/>
    <property type="match status" value="1"/>
</dbReference>
<dbReference type="PANTHER" id="PTHR48102:SF7">
    <property type="entry name" value="ATP-DEPENDENT CLP PROTEASE ATP-BINDING SUBUNIT CLPX-LIKE, MITOCHONDRIAL"/>
    <property type="match status" value="1"/>
</dbReference>
<dbReference type="PANTHER" id="PTHR48102">
    <property type="entry name" value="ATP-DEPENDENT CLP PROTEASE ATP-BINDING SUBUNIT CLPX-LIKE, MITOCHONDRIAL-RELATED"/>
    <property type="match status" value="1"/>
</dbReference>
<dbReference type="Pfam" id="PF07724">
    <property type="entry name" value="AAA_2"/>
    <property type="match status" value="1"/>
</dbReference>
<dbReference type="Pfam" id="PF10431">
    <property type="entry name" value="ClpB_D2-small"/>
    <property type="match status" value="1"/>
</dbReference>
<dbReference type="SMART" id="SM00382">
    <property type="entry name" value="AAA"/>
    <property type="match status" value="1"/>
</dbReference>
<dbReference type="SMART" id="SM01086">
    <property type="entry name" value="ClpB_D2-small"/>
    <property type="match status" value="1"/>
</dbReference>
<dbReference type="SUPFAM" id="SSF52540">
    <property type="entry name" value="P-loop containing nucleoside triphosphate hydrolases"/>
    <property type="match status" value="1"/>
</dbReference>
<dbReference type="PROSITE" id="PS51902">
    <property type="entry name" value="CLPX_ZB"/>
    <property type="match status" value="1"/>
</dbReference>
<evidence type="ECO:0000250" key="1">
    <source>
        <dbReference type="UniProtKB" id="O76031"/>
    </source>
</evidence>
<evidence type="ECO:0000255" key="2"/>
<evidence type="ECO:0000255" key="3">
    <source>
        <dbReference type="PROSITE-ProRule" id="PRU01250"/>
    </source>
</evidence>
<evidence type="ECO:0000256" key="4">
    <source>
        <dbReference type="SAM" id="MobiDB-lite"/>
    </source>
</evidence>
<evidence type="ECO:0000269" key="5">
    <source>
    </source>
</evidence>
<evidence type="ECO:0000269" key="6">
    <source>
    </source>
</evidence>
<evidence type="ECO:0000305" key="7"/>
<evidence type="ECO:0000312" key="8">
    <source>
        <dbReference type="MGI" id="MGI:1346017"/>
    </source>
</evidence>
<proteinExistence type="evidence at protein level"/>
<comment type="function">
    <text evidence="1 5">ATP-dependent chaperone that functions as an unfoldase. As part of the ClpXP protease complex, it recognizes specific protein substrates, unfolds them using energy derived from ATP hydrolysis, and then translocates them to the proteolytic subunit (CLPP) of the ClpXP complex for degradation (PubMed:10347188). Thanks to its chaperone activity, it also functions in the incorporation of the pyridoxal phosphate cofactor into 5-aminolevulinate synthase, thereby activating 5-aminolevulinate (ALA) synthesis, the first step in heme biosynthesis (By similarity). This chaperone is also involved in the control of mtDNA nucleoid distribution, by regulating mitochondrial transcription factor A (TFAM) activity (By similarity).</text>
</comment>
<comment type="catalytic activity">
    <reaction evidence="5">
        <text>ATP + H2O = ADP + phosphate + H(+)</text>
        <dbReference type="Rhea" id="RHEA:13065"/>
        <dbReference type="ChEBI" id="CHEBI:15377"/>
        <dbReference type="ChEBI" id="CHEBI:15378"/>
        <dbReference type="ChEBI" id="CHEBI:30616"/>
        <dbReference type="ChEBI" id="CHEBI:43474"/>
        <dbReference type="ChEBI" id="CHEBI:456216"/>
        <dbReference type="EC" id="3.6.4.10"/>
    </reaction>
    <physiologicalReaction direction="left-to-right" evidence="5">
        <dbReference type="Rhea" id="RHEA:13066"/>
    </physiologicalReaction>
</comment>
<comment type="subunit">
    <text evidence="1 6">Homohexamer that forms a ring structure; this hexamerization requires ATP binding. Component of the ClpXP complex formed by the assembly of two CLPP heptameric rings with two CLPX hexameric rings, giving rise to a symmetrical structure with two central CLPP rings flanked by a CLPX ring at either end of the complex (PubMed:22710082). Interacts with TFAM (By similarity).</text>
</comment>
<comment type="subcellular location">
    <subcellularLocation>
        <location evidence="6">Mitochondrion</location>
    </subcellularLocation>
    <subcellularLocation>
        <location evidence="1">Mitochondrion matrix</location>
        <location evidence="1">Mitochondrion nucleoid</location>
    </subcellularLocation>
</comment>
<comment type="tissue specificity">
    <text evidence="6">Detected in liver (at protein level).</text>
</comment>
<comment type="similarity">
    <text evidence="3">Belongs to the ClpX chaperone family.</text>
</comment>